<sequence>MSLPRRAAHVAIRGYQLTLSGLVGRQCRHWPSCSAYTDEAIERHGLWAGGWMGLARICRCGPFGTHGIDLVPERLPEGAAWHRPWAYGRWRGVNAPATPLAEEVHDPLPGP</sequence>
<comment type="function">
    <text evidence="1">Could be involved in insertion of integral membrane proteins into the membrane.</text>
</comment>
<comment type="subcellular location">
    <subcellularLocation>
        <location evidence="1">Cell inner membrane</location>
        <topology evidence="1">Peripheral membrane protein</topology>
        <orientation evidence="1">Cytoplasmic side</orientation>
    </subcellularLocation>
</comment>
<comment type="similarity">
    <text evidence="1">Belongs to the UPF0161 family.</text>
</comment>
<organism>
    <name type="scientific">Methylobacterium nodulans (strain LMG 21967 / CNCM I-2342 / ORS 2060)</name>
    <dbReference type="NCBI Taxonomy" id="460265"/>
    <lineage>
        <taxon>Bacteria</taxon>
        <taxon>Pseudomonadati</taxon>
        <taxon>Pseudomonadota</taxon>
        <taxon>Alphaproteobacteria</taxon>
        <taxon>Hyphomicrobiales</taxon>
        <taxon>Methylobacteriaceae</taxon>
        <taxon>Methylobacterium</taxon>
    </lineage>
</organism>
<name>YIDD_METNO</name>
<evidence type="ECO:0000255" key="1">
    <source>
        <dbReference type="HAMAP-Rule" id="MF_00386"/>
    </source>
</evidence>
<reference key="1">
    <citation type="submission" date="2009-01" db="EMBL/GenBank/DDBJ databases">
        <title>Complete sequence of chromosome of Methylobacterium nodulans ORS 2060.</title>
        <authorList>
            <consortium name="US DOE Joint Genome Institute"/>
            <person name="Lucas S."/>
            <person name="Copeland A."/>
            <person name="Lapidus A."/>
            <person name="Glavina del Rio T."/>
            <person name="Dalin E."/>
            <person name="Tice H."/>
            <person name="Bruce D."/>
            <person name="Goodwin L."/>
            <person name="Pitluck S."/>
            <person name="Sims D."/>
            <person name="Brettin T."/>
            <person name="Detter J.C."/>
            <person name="Han C."/>
            <person name="Larimer F."/>
            <person name="Land M."/>
            <person name="Hauser L."/>
            <person name="Kyrpides N."/>
            <person name="Ivanova N."/>
            <person name="Marx C.J."/>
            <person name="Richardson P."/>
        </authorList>
    </citation>
    <scope>NUCLEOTIDE SEQUENCE [LARGE SCALE GENOMIC DNA]</scope>
    <source>
        <strain>LMG 21967 / CNCM I-2342 / ORS 2060</strain>
    </source>
</reference>
<proteinExistence type="inferred from homology"/>
<gene>
    <name type="ordered locus">Mnod_7170</name>
</gene>
<protein>
    <recommendedName>
        <fullName evidence="1">Putative membrane protein insertion efficiency factor</fullName>
    </recommendedName>
</protein>
<keyword id="KW-0997">Cell inner membrane</keyword>
<keyword id="KW-1003">Cell membrane</keyword>
<keyword id="KW-0472">Membrane</keyword>
<keyword id="KW-1185">Reference proteome</keyword>
<accession>B8IKC5</accession>
<dbReference type="EMBL" id="CP001349">
    <property type="protein sequence ID" value="ACL61910.1"/>
    <property type="molecule type" value="Genomic_DNA"/>
</dbReference>
<dbReference type="RefSeq" id="WP_015933473.1">
    <property type="nucleotide sequence ID" value="NC_011894.1"/>
</dbReference>
<dbReference type="STRING" id="460265.Mnod_7170"/>
<dbReference type="KEGG" id="mno:Mnod_7170"/>
<dbReference type="eggNOG" id="COG0759">
    <property type="taxonomic scope" value="Bacteria"/>
</dbReference>
<dbReference type="HOGENOM" id="CLU_144811_0_0_5"/>
<dbReference type="OrthoDB" id="9801753at2"/>
<dbReference type="Proteomes" id="UP000008207">
    <property type="component" value="Chromosome"/>
</dbReference>
<dbReference type="GO" id="GO:0005886">
    <property type="term" value="C:plasma membrane"/>
    <property type="evidence" value="ECO:0007669"/>
    <property type="project" value="UniProtKB-SubCell"/>
</dbReference>
<dbReference type="HAMAP" id="MF_00386">
    <property type="entry name" value="UPF0161_YidD"/>
    <property type="match status" value="1"/>
</dbReference>
<dbReference type="InterPro" id="IPR002696">
    <property type="entry name" value="Membr_insert_effic_factor_YidD"/>
</dbReference>
<dbReference type="NCBIfam" id="TIGR00278">
    <property type="entry name" value="membrane protein insertion efficiency factor YidD"/>
    <property type="match status" value="1"/>
</dbReference>
<dbReference type="PANTHER" id="PTHR33383">
    <property type="entry name" value="MEMBRANE PROTEIN INSERTION EFFICIENCY FACTOR-RELATED"/>
    <property type="match status" value="1"/>
</dbReference>
<dbReference type="PANTHER" id="PTHR33383:SF1">
    <property type="entry name" value="MEMBRANE PROTEIN INSERTION EFFICIENCY FACTOR-RELATED"/>
    <property type="match status" value="1"/>
</dbReference>
<dbReference type="Pfam" id="PF01809">
    <property type="entry name" value="YidD"/>
    <property type="match status" value="1"/>
</dbReference>
<dbReference type="SMART" id="SM01234">
    <property type="entry name" value="Haemolytic"/>
    <property type="match status" value="1"/>
</dbReference>
<feature type="chain" id="PRO_1000197762" description="Putative membrane protein insertion efficiency factor">
    <location>
        <begin position="1"/>
        <end position="111"/>
    </location>
</feature>